<protein>
    <recommendedName>
        <fullName evidence="2">Formamidopyrimidine-DNA glycosylase</fullName>
        <shortName evidence="2">Fapy-DNA glycosylase</shortName>
        <ecNumber evidence="2">3.2.2.23</ecNumber>
    </recommendedName>
    <alternativeName>
        <fullName evidence="2">DNA-(apurinic or apyrimidinic site) lyase MutM</fullName>
        <shortName evidence="2">AP lyase MutM</shortName>
        <ecNumber evidence="2">4.2.99.18</ecNumber>
    </alternativeName>
</protein>
<accession>A1T737</accession>
<gene>
    <name evidence="2" type="primary">mutM</name>
    <name evidence="2" type="synonym">fpg</name>
    <name type="ordered locus">Mvan_2172</name>
</gene>
<dbReference type="EC" id="3.2.2.23" evidence="2"/>
<dbReference type="EC" id="4.2.99.18" evidence="2"/>
<dbReference type="EMBL" id="CP000511">
    <property type="protein sequence ID" value="ABM12987.1"/>
    <property type="molecule type" value="Genomic_DNA"/>
</dbReference>
<dbReference type="RefSeq" id="WP_011779401.1">
    <property type="nucleotide sequence ID" value="NZ_JACKSD010000001.1"/>
</dbReference>
<dbReference type="SMR" id="A1T737"/>
<dbReference type="STRING" id="350058.Mvan_2172"/>
<dbReference type="KEGG" id="mva:Mvan_2172"/>
<dbReference type="eggNOG" id="COG0266">
    <property type="taxonomic scope" value="Bacteria"/>
</dbReference>
<dbReference type="HOGENOM" id="CLU_038423_1_2_11"/>
<dbReference type="Proteomes" id="UP000009159">
    <property type="component" value="Chromosome"/>
</dbReference>
<dbReference type="GO" id="GO:0034039">
    <property type="term" value="F:8-oxo-7,8-dihydroguanine DNA N-glycosylase activity"/>
    <property type="evidence" value="ECO:0007669"/>
    <property type="project" value="TreeGrafter"/>
</dbReference>
<dbReference type="GO" id="GO:0140078">
    <property type="term" value="F:class I DNA-(apurinic or apyrimidinic site) endonuclease activity"/>
    <property type="evidence" value="ECO:0007669"/>
    <property type="project" value="UniProtKB-EC"/>
</dbReference>
<dbReference type="GO" id="GO:0003684">
    <property type="term" value="F:damaged DNA binding"/>
    <property type="evidence" value="ECO:0007669"/>
    <property type="project" value="InterPro"/>
</dbReference>
<dbReference type="GO" id="GO:0008270">
    <property type="term" value="F:zinc ion binding"/>
    <property type="evidence" value="ECO:0007669"/>
    <property type="project" value="UniProtKB-UniRule"/>
</dbReference>
<dbReference type="GO" id="GO:0006284">
    <property type="term" value="P:base-excision repair"/>
    <property type="evidence" value="ECO:0007669"/>
    <property type="project" value="InterPro"/>
</dbReference>
<dbReference type="CDD" id="cd08966">
    <property type="entry name" value="EcFpg-like_N"/>
    <property type="match status" value="1"/>
</dbReference>
<dbReference type="FunFam" id="1.10.8.50:FF:000003">
    <property type="entry name" value="Formamidopyrimidine-DNA glycosylase"/>
    <property type="match status" value="1"/>
</dbReference>
<dbReference type="FunFam" id="3.20.190.10:FF:000006">
    <property type="entry name" value="Formamidopyrimidine-DNA glycosylase"/>
    <property type="match status" value="1"/>
</dbReference>
<dbReference type="Gene3D" id="1.10.8.50">
    <property type="match status" value="1"/>
</dbReference>
<dbReference type="Gene3D" id="3.20.190.10">
    <property type="entry name" value="MutM-like, N-terminal"/>
    <property type="match status" value="1"/>
</dbReference>
<dbReference type="HAMAP" id="MF_00103">
    <property type="entry name" value="Fapy_DNA_glycosyl"/>
    <property type="match status" value="1"/>
</dbReference>
<dbReference type="InterPro" id="IPR015886">
    <property type="entry name" value="DNA_glyclase/AP_lyase_DNA-bd"/>
</dbReference>
<dbReference type="InterPro" id="IPR015887">
    <property type="entry name" value="DNA_glyclase_Znf_dom_DNA_BS"/>
</dbReference>
<dbReference type="InterPro" id="IPR020629">
    <property type="entry name" value="Formamido-pyr_DNA_Glyclase"/>
</dbReference>
<dbReference type="InterPro" id="IPR012319">
    <property type="entry name" value="FPG_cat"/>
</dbReference>
<dbReference type="InterPro" id="IPR035937">
    <property type="entry name" value="MutM-like_N-ter"/>
</dbReference>
<dbReference type="InterPro" id="IPR010979">
    <property type="entry name" value="Ribosomal_uS13-like_H2TH"/>
</dbReference>
<dbReference type="InterPro" id="IPR000214">
    <property type="entry name" value="Znf_DNA_glyclase/AP_lyase"/>
</dbReference>
<dbReference type="InterPro" id="IPR010663">
    <property type="entry name" value="Znf_FPG/IleRS"/>
</dbReference>
<dbReference type="NCBIfam" id="TIGR00577">
    <property type="entry name" value="fpg"/>
    <property type="match status" value="1"/>
</dbReference>
<dbReference type="NCBIfam" id="NF002211">
    <property type="entry name" value="PRK01103.1"/>
    <property type="match status" value="1"/>
</dbReference>
<dbReference type="PANTHER" id="PTHR22993">
    <property type="entry name" value="FORMAMIDOPYRIMIDINE-DNA GLYCOSYLASE"/>
    <property type="match status" value="1"/>
</dbReference>
<dbReference type="PANTHER" id="PTHR22993:SF9">
    <property type="entry name" value="FORMAMIDOPYRIMIDINE-DNA GLYCOSYLASE"/>
    <property type="match status" value="1"/>
</dbReference>
<dbReference type="Pfam" id="PF01149">
    <property type="entry name" value="Fapy_DNA_glyco"/>
    <property type="match status" value="1"/>
</dbReference>
<dbReference type="Pfam" id="PF06831">
    <property type="entry name" value="H2TH"/>
    <property type="match status" value="1"/>
</dbReference>
<dbReference type="Pfam" id="PF06827">
    <property type="entry name" value="zf-FPG_IleRS"/>
    <property type="match status" value="1"/>
</dbReference>
<dbReference type="SMART" id="SM00898">
    <property type="entry name" value="Fapy_DNA_glyco"/>
    <property type="match status" value="1"/>
</dbReference>
<dbReference type="SMART" id="SM01232">
    <property type="entry name" value="H2TH"/>
    <property type="match status" value="1"/>
</dbReference>
<dbReference type="SUPFAM" id="SSF57716">
    <property type="entry name" value="Glucocorticoid receptor-like (DNA-binding domain)"/>
    <property type="match status" value="1"/>
</dbReference>
<dbReference type="SUPFAM" id="SSF81624">
    <property type="entry name" value="N-terminal domain of MutM-like DNA repair proteins"/>
    <property type="match status" value="1"/>
</dbReference>
<dbReference type="SUPFAM" id="SSF46946">
    <property type="entry name" value="S13-like H2TH domain"/>
    <property type="match status" value="1"/>
</dbReference>
<dbReference type="PROSITE" id="PS51068">
    <property type="entry name" value="FPG_CAT"/>
    <property type="match status" value="1"/>
</dbReference>
<dbReference type="PROSITE" id="PS01242">
    <property type="entry name" value="ZF_FPG_1"/>
    <property type="match status" value="1"/>
</dbReference>
<dbReference type="PROSITE" id="PS51066">
    <property type="entry name" value="ZF_FPG_2"/>
    <property type="match status" value="1"/>
</dbReference>
<feature type="initiator methionine" description="Removed" evidence="1">
    <location>
        <position position="1"/>
    </location>
</feature>
<feature type="chain" id="PRO_1000008725" description="Formamidopyrimidine-DNA glycosylase">
    <location>
        <begin position="2"/>
        <end position="293"/>
    </location>
</feature>
<feature type="zinc finger region" description="FPG-type" evidence="2">
    <location>
        <begin position="255"/>
        <end position="289"/>
    </location>
</feature>
<feature type="active site" description="Schiff-base intermediate with DNA" evidence="2">
    <location>
        <position position="2"/>
    </location>
</feature>
<feature type="active site" description="Proton donor" evidence="2">
    <location>
        <position position="3"/>
    </location>
</feature>
<feature type="active site" description="Proton donor; for beta-elimination activity" evidence="2">
    <location>
        <position position="61"/>
    </location>
</feature>
<feature type="active site" description="Proton donor; for delta-elimination activity" evidence="2">
    <location>
        <position position="279"/>
    </location>
</feature>
<feature type="binding site" evidence="2">
    <location>
        <position position="104"/>
    </location>
    <ligand>
        <name>DNA</name>
        <dbReference type="ChEBI" id="CHEBI:16991"/>
    </ligand>
</feature>
<feature type="binding site" evidence="2">
    <location>
        <position position="123"/>
    </location>
    <ligand>
        <name>DNA</name>
        <dbReference type="ChEBI" id="CHEBI:16991"/>
    </ligand>
</feature>
<feature type="binding site" evidence="2">
    <location>
        <position position="169"/>
    </location>
    <ligand>
        <name>DNA</name>
        <dbReference type="ChEBI" id="CHEBI:16991"/>
    </ligand>
</feature>
<proteinExistence type="inferred from homology"/>
<evidence type="ECO:0000250" key="1"/>
<evidence type="ECO:0000255" key="2">
    <source>
        <dbReference type="HAMAP-Rule" id="MF_00103"/>
    </source>
</evidence>
<keyword id="KW-0227">DNA damage</keyword>
<keyword id="KW-0234">DNA repair</keyword>
<keyword id="KW-0238">DNA-binding</keyword>
<keyword id="KW-0326">Glycosidase</keyword>
<keyword id="KW-0378">Hydrolase</keyword>
<keyword id="KW-0456">Lyase</keyword>
<keyword id="KW-0479">Metal-binding</keyword>
<keyword id="KW-0511">Multifunctional enzyme</keyword>
<keyword id="KW-0862">Zinc</keyword>
<keyword id="KW-0863">Zinc-finger</keyword>
<name>FPG_MYCVP</name>
<organism>
    <name type="scientific">Mycolicibacterium vanbaalenii (strain DSM 7251 / JCM 13017 / BCRC 16820 / KCTC 9966 / NRRL B-24157 / PYR-1)</name>
    <name type="common">Mycobacterium vanbaalenii</name>
    <dbReference type="NCBI Taxonomy" id="350058"/>
    <lineage>
        <taxon>Bacteria</taxon>
        <taxon>Bacillati</taxon>
        <taxon>Actinomycetota</taxon>
        <taxon>Actinomycetes</taxon>
        <taxon>Mycobacteriales</taxon>
        <taxon>Mycobacteriaceae</taxon>
        <taxon>Mycolicibacterium</taxon>
    </lineage>
</organism>
<comment type="function">
    <text evidence="2">Involved in base excision repair of DNA damaged by oxidation or by mutagenic agents. Acts as a DNA glycosylase that recognizes and removes damaged bases. Has a preference for oxidized purines, such as 7,8-dihydro-8-oxoguanine (8-oxoG). Has AP (apurinic/apyrimidinic) lyase activity and introduces nicks in the DNA strand. Cleaves the DNA backbone by beta-delta elimination to generate a single-strand break at the site of the removed base with both 3'- and 5'-phosphates.</text>
</comment>
<comment type="catalytic activity">
    <reaction evidence="2">
        <text>Hydrolysis of DNA containing ring-opened 7-methylguanine residues, releasing 2,6-diamino-4-hydroxy-5-(N-methyl)formamidopyrimidine.</text>
        <dbReference type="EC" id="3.2.2.23"/>
    </reaction>
</comment>
<comment type="catalytic activity">
    <reaction evidence="2">
        <text>2'-deoxyribonucleotide-(2'-deoxyribose 5'-phosphate)-2'-deoxyribonucleotide-DNA = a 3'-end 2'-deoxyribonucleotide-(2,3-dehydro-2,3-deoxyribose 5'-phosphate)-DNA + a 5'-end 5'-phospho-2'-deoxyribonucleoside-DNA + H(+)</text>
        <dbReference type="Rhea" id="RHEA:66592"/>
        <dbReference type="Rhea" id="RHEA-COMP:13180"/>
        <dbReference type="Rhea" id="RHEA-COMP:16897"/>
        <dbReference type="Rhea" id="RHEA-COMP:17067"/>
        <dbReference type="ChEBI" id="CHEBI:15378"/>
        <dbReference type="ChEBI" id="CHEBI:136412"/>
        <dbReference type="ChEBI" id="CHEBI:157695"/>
        <dbReference type="ChEBI" id="CHEBI:167181"/>
        <dbReference type="EC" id="4.2.99.18"/>
    </reaction>
</comment>
<comment type="cofactor">
    <cofactor evidence="2">
        <name>Zn(2+)</name>
        <dbReference type="ChEBI" id="CHEBI:29105"/>
    </cofactor>
    <text evidence="2">Binds 1 zinc ion per subunit.</text>
</comment>
<comment type="subunit">
    <text evidence="2">Monomer.</text>
</comment>
<comment type="similarity">
    <text evidence="2">Belongs to the FPG family.</text>
</comment>
<reference key="1">
    <citation type="submission" date="2006-12" db="EMBL/GenBank/DDBJ databases">
        <title>Complete sequence of Mycobacterium vanbaalenii PYR-1.</title>
        <authorList>
            <consortium name="US DOE Joint Genome Institute"/>
            <person name="Copeland A."/>
            <person name="Lucas S."/>
            <person name="Lapidus A."/>
            <person name="Barry K."/>
            <person name="Detter J.C."/>
            <person name="Glavina del Rio T."/>
            <person name="Hammon N."/>
            <person name="Israni S."/>
            <person name="Dalin E."/>
            <person name="Tice H."/>
            <person name="Pitluck S."/>
            <person name="Singan V."/>
            <person name="Schmutz J."/>
            <person name="Larimer F."/>
            <person name="Land M."/>
            <person name="Hauser L."/>
            <person name="Kyrpides N."/>
            <person name="Anderson I.J."/>
            <person name="Miller C."/>
            <person name="Richardson P."/>
        </authorList>
    </citation>
    <scope>NUCLEOTIDE SEQUENCE [LARGE SCALE GENOMIC DNA]</scope>
    <source>
        <strain>DSM 7251 / JCM 13017 / BCRC 16820 / KCTC 9966 / NRRL B-24157 / PYR-1</strain>
    </source>
</reference>
<sequence>MPELPEVEVVRRGLAEHVTGRTVTAVRVHHPRAVRRHEAGPADLTARLLDTTITGTGRRGKYLWLTLGDGADEPLARRESNFALVVHLGMSGQMLLGDVPNANHLRIAALLDDGTTLSFVDQRTFGGWMLADLVTVDGSDVPAPVAHIARDPLDPLFDRDAVVKVLRRKHSEIKRQLLDQTVVSGIGNIYADESLWRAKINGARLASGVSRAKLAELLGAAADVMTDALAQGGTSFDSLYVNVNGESGYFDRSLDAYGREGEPCRRCGAIMRRDKFMNRSSFYCPRCQPRPRV</sequence>